<sequence>SVGFKAGVKDYRLTYYTPEYETLATDILAAFRVTPQPGVPPEEAGAAVAAESSTGTWTTVWTDGLTSLDRYKGRCYHIEPVAGEENQYIAYVAYPLDLFEEGSVTNMFTSIVGNVFGFKALRALRLEDLRIPPAYSKTFQGPPHGIQVERDKLNKYGRPLLGCTIKPKLGLSAKNYGRAVYECLRGGLDFTKDDENVNSQPFMRWRDRFLFCTEAIYKAQAETGEIKGHYLNATAGTSEEMIKRAVCARELGVPIVMHDYLTGGFTANTSLAHYCRDNGLLLHIHRAMHAVIDRQRNHGIHFRVLAKALRMSGGDHIHSGTVVGKLEGERDVTLGFVDLLRDDFIEKDRSRGIYFTQDWVSMPGVLPVASGGIHVWHMPALTEIFGDDSVLQFG</sequence>
<name>RBL_EURFE</name>
<gene>
    <name type="primary">rbcL</name>
</gene>
<dbReference type="EC" id="4.1.1.39"/>
<dbReference type="EMBL" id="M77035">
    <property type="protein sequence ID" value="AAA84249.1"/>
    <property type="molecule type" value="Genomic_DNA"/>
</dbReference>
<dbReference type="SMR" id="Q05799"/>
<dbReference type="GO" id="GO:0009507">
    <property type="term" value="C:chloroplast"/>
    <property type="evidence" value="ECO:0007669"/>
    <property type="project" value="UniProtKB-SubCell"/>
</dbReference>
<dbReference type="GO" id="GO:0000287">
    <property type="term" value="F:magnesium ion binding"/>
    <property type="evidence" value="ECO:0007669"/>
    <property type="project" value="InterPro"/>
</dbReference>
<dbReference type="GO" id="GO:0004497">
    <property type="term" value="F:monooxygenase activity"/>
    <property type="evidence" value="ECO:0007669"/>
    <property type="project" value="UniProtKB-KW"/>
</dbReference>
<dbReference type="GO" id="GO:0016984">
    <property type="term" value="F:ribulose-bisphosphate carboxylase activity"/>
    <property type="evidence" value="ECO:0007669"/>
    <property type="project" value="UniProtKB-EC"/>
</dbReference>
<dbReference type="GO" id="GO:0009853">
    <property type="term" value="P:photorespiration"/>
    <property type="evidence" value="ECO:0007669"/>
    <property type="project" value="UniProtKB-KW"/>
</dbReference>
<dbReference type="GO" id="GO:0019253">
    <property type="term" value="P:reductive pentose-phosphate cycle"/>
    <property type="evidence" value="ECO:0007669"/>
    <property type="project" value="UniProtKB-KW"/>
</dbReference>
<dbReference type="FunFam" id="3.20.20.110:FF:000003">
    <property type="entry name" value="Ribulose bisphosphate carboxylase large chain"/>
    <property type="match status" value="1"/>
</dbReference>
<dbReference type="FunFam" id="3.30.70.150:FF:000001">
    <property type="entry name" value="Ribulose bisphosphate carboxylase large chain"/>
    <property type="match status" value="1"/>
</dbReference>
<dbReference type="Gene3D" id="3.20.20.110">
    <property type="entry name" value="Ribulose bisphosphate carboxylase, large subunit, C-terminal domain"/>
    <property type="match status" value="1"/>
</dbReference>
<dbReference type="Gene3D" id="3.30.70.150">
    <property type="entry name" value="RuBisCO large subunit, N-terminal domain"/>
    <property type="match status" value="1"/>
</dbReference>
<dbReference type="InterPro" id="IPR033966">
    <property type="entry name" value="RuBisCO"/>
</dbReference>
<dbReference type="InterPro" id="IPR020878">
    <property type="entry name" value="RuBisCo_large_chain_AS"/>
</dbReference>
<dbReference type="InterPro" id="IPR000685">
    <property type="entry name" value="RuBisCO_lsu_C"/>
</dbReference>
<dbReference type="InterPro" id="IPR036376">
    <property type="entry name" value="RuBisCO_lsu_C_sf"/>
</dbReference>
<dbReference type="InterPro" id="IPR017443">
    <property type="entry name" value="RuBisCO_lsu_fd_N"/>
</dbReference>
<dbReference type="InterPro" id="IPR036422">
    <property type="entry name" value="RuBisCO_lsu_N_sf"/>
</dbReference>
<dbReference type="NCBIfam" id="NF003252">
    <property type="entry name" value="PRK04208.1"/>
    <property type="match status" value="1"/>
</dbReference>
<dbReference type="PANTHER" id="PTHR42704">
    <property type="entry name" value="RIBULOSE BISPHOSPHATE CARBOXYLASE"/>
    <property type="match status" value="1"/>
</dbReference>
<dbReference type="PANTHER" id="PTHR42704:SF19">
    <property type="entry name" value="RIBULOSE BISPHOSPHATE CARBOXYLASE LARGE CHAIN"/>
    <property type="match status" value="1"/>
</dbReference>
<dbReference type="Pfam" id="PF00016">
    <property type="entry name" value="RuBisCO_large"/>
    <property type="match status" value="1"/>
</dbReference>
<dbReference type="Pfam" id="PF02788">
    <property type="entry name" value="RuBisCO_large_N"/>
    <property type="match status" value="1"/>
</dbReference>
<dbReference type="SFLD" id="SFLDS00014">
    <property type="entry name" value="RuBisCO"/>
    <property type="match status" value="1"/>
</dbReference>
<dbReference type="SFLD" id="SFLDG00301">
    <property type="entry name" value="RuBisCO-like_proteins"/>
    <property type="match status" value="1"/>
</dbReference>
<dbReference type="SUPFAM" id="SSF51649">
    <property type="entry name" value="RuBisCo, C-terminal domain"/>
    <property type="match status" value="1"/>
</dbReference>
<dbReference type="SUPFAM" id="SSF54966">
    <property type="entry name" value="RuBisCO, large subunit, small (N-terminal) domain"/>
    <property type="match status" value="1"/>
</dbReference>
<dbReference type="PROSITE" id="PS00157">
    <property type="entry name" value="RUBISCO_LARGE"/>
    <property type="match status" value="1"/>
</dbReference>
<keyword id="KW-0113">Calvin cycle</keyword>
<keyword id="KW-0120">Carbon dioxide fixation</keyword>
<keyword id="KW-0150">Chloroplast</keyword>
<keyword id="KW-0456">Lyase</keyword>
<keyword id="KW-0460">Magnesium</keyword>
<keyword id="KW-0479">Metal-binding</keyword>
<keyword id="KW-0488">Methylation</keyword>
<keyword id="KW-0503">Monooxygenase</keyword>
<keyword id="KW-0560">Oxidoreductase</keyword>
<keyword id="KW-0601">Photorespiration</keyword>
<keyword id="KW-0602">Photosynthesis</keyword>
<keyword id="KW-0934">Plastid</keyword>
<accession>Q05799</accession>
<reference key="1">
    <citation type="journal article" date="1991" name="Proc. Natl. Acad. Sci. U.S.A.">
        <title>Molecular evolutionary history of ancient aquatic angiosperms.</title>
        <authorList>
            <person name="Les D.H."/>
            <person name="Garvin D.K."/>
            <person name="Wimpee C.F."/>
        </authorList>
    </citation>
    <scope>NUCLEOTIDE SEQUENCE [GENOMIC DNA]</scope>
</reference>
<comment type="function">
    <text evidence="1">RuBisCO catalyzes two reactions: the carboxylation of D-ribulose 1,5-bisphosphate, the primary event in carbon dioxide fixation, as well as the oxidative fragmentation of the pentose substrate in the photorespiration process. Both reactions occur simultaneously and in competition at the same active site (By similarity).</text>
</comment>
<comment type="catalytic activity">
    <reaction>
        <text>2 (2R)-3-phosphoglycerate + 2 H(+) = D-ribulose 1,5-bisphosphate + CO2 + H2O</text>
        <dbReference type="Rhea" id="RHEA:23124"/>
        <dbReference type="ChEBI" id="CHEBI:15377"/>
        <dbReference type="ChEBI" id="CHEBI:15378"/>
        <dbReference type="ChEBI" id="CHEBI:16526"/>
        <dbReference type="ChEBI" id="CHEBI:57870"/>
        <dbReference type="ChEBI" id="CHEBI:58272"/>
        <dbReference type="EC" id="4.1.1.39"/>
    </reaction>
</comment>
<comment type="catalytic activity">
    <reaction>
        <text>D-ribulose 1,5-bisphosphate + O2 = 2-phosphoglycolate + (2R)-3-phosphoglycerate + 2 H(+)</text>
        <dbReference type="Rhea" id="RHEA:36631"/>
        <dbReference type="ChEBI" id="CHEBI:15378"/>
        <dbReference type="ChEBI" id="CHEBI:15379"/>
        <dbReference type="ChEBI" id="CHEBI:57870"/>
        <dbReference type="ChEBI" id="CHEBI:58033"/>
        <dbReference type="ChEBI" id="CHEBI:58272"/>
    </reaction>
</comment>
<comment type="cofactor">
    <cofactor evidence="1">
        <name>Mg(2+)</name>
        <dbReference type="ChEBI" id="CHEBI:18420"/>
    </cofactor>
    <text evidence="1">Binds 1 Mg(2+) ion per subunit.</text>
</comment>
<comment type="subunit">
    <text evidence="1">Heterohexadecamer of 8 large chains and 8 small chains.</text>
</comment>
<comment type="subcellular location">
    <subcellularLocation>
        <location>Plastid</location>
        <location>Chloroplast</location>
    </subcellularLocation>
</comment>
<comment type="miscellaneous">
    <text evidence="1">The basic functional RuBisCO is composed of a large chain homodimer in a 'head-to-tail' conformation. In form I RuBisCO this homodimer is arranged in a barrel-like tetramer with the small subunits forming a tetrameric 'cap' on each end of the 'barrel' (By similarity).</text>
</comment>
<comment type="similarity">
    <text evidence="3">Belongs to the RuBisCO large chain family. Type I subfamily.</text>
</comment>
<geneLocation type="chloroplast"/>
<organism>
    <name type="scientific">Euryale ferox</name>
    <name type="common">Gorgon plant</name>
    <name type="synonym">Prickly water lily</name>
    <dbReference type="NCBI Taxonomy" id="4414"/>
    <lineage>
        <taxon>Eukaryota</taxon>
        <taxon>Viridiplantae</taxon>
        <taxon>Streptophyta</taxon>
        <taxon>Embryophyta</taxon>
        <taxon>Tracheophyta</taxon>
        <taxon>Spermatophyta</taxon>
        <taxon>Magnoliopsida</taxon>
        <taxon>Nymphaeales</taxon>
        <taxon>Nymphaeaceae</taxon>
        <taxon>Euryale</taxon>
    </lineage>
</organism>
<proteinExistence type="inferred from homology"/>
<evidence type="ECO:0000250" key="1"/>
<evidence type="ECO:0000255" key="2">
    <source>
        <dbReference type="PROSITE-ProRule" id="PRU10114"/>
    </source>
</evidence>
<evidence type="ECO:0000305" key="3"/>
<protein>
    <recommendedName>
        <fullName>Ribulose bisphosphate carboxylase large chain</fullName>
        <shortName>RuBisCO large subunit</shortName>
        <ecNumber>4.1.1.39</ecNumber>
    </recommendedName>
</protein>
<feature type="chain" id="PRO_0000062472" description="Ribulose bisphosphate carboxylase large chain">
    <location>
        <begin position="1" status="less than"/>
        <end position="394" status="greater than"/>
    </location>
</feature>
<feature type="active site" description="Proton acceptor" evidence="1">
    <location>
        <position position="166"/>
    </location>
</feature>
<feature type="active site" description="Proton acceptor" evidence="1">
    <location>
        <position position="285"/>
    </location>
</feature>
<feature type="binding site" description="in homodimeric partner" evidence="1">
    <location>
        <position position="114"/>
    </location>
    <ligand>
        <name>substrate</name>
    </ligand>
</feature>
<feature type="binding site" evidence="1">
    <location>
        <position position="164"/>
    </location>
    <ligand>
        <name>substrate</name>
    </ligand>
</feature>
<feature type="binding site" evidence="1">
    <location>
        <position position="168"/>
    </location>
    <ligand>
        <name>substrate</name>
    </ligand>
</feature>
<feature type="binding site" description="via carbamate group" evidence="2">
    <location>
        <position position="192"/>
    </location>
    <ligand>
        <name>Mg(2+)</name>
        <dbReference type="ChEBI" id="CHEBI:18420"/>
    </ligand>
</feature>
<feature type="binding site" evidence="2">
    <location>
        <position position="194"/>
    </location>
    <ligand>
        <name>Mg(2+)</name>
        <dbReference type="ChEBI" id="CHEBI:18420"/>
    </ligand>
</feature>
<feature type="binding site" evidence="2">
    <location>
        <position position="195"/>
    </location>
    <ligand>
        <name>Mg(2+)</name>
        <dbReference type="ChEBI" id="CHEBI:18420"/>
    </ligand>
</feature>
<feature type="binding site" evidence="1">
    <location>
        <position position="286"/>
    </location>
    <ligand>
        <name>substrate</name>
    </ligand>
</feature>
<feature type="binding site" evidence="1">
    <location>
        <position position="318"/>
    </location>
    <ligand>
        <name>substrate</name>
    </ligand>
</feature>
<feature type="binding site" evidence="1">
    <location>
        <position position="370"/>
    </location>
    <ligand>
        <name>substrate</name>
    </ligand>
</feature>
<feature type="site" description="Transition state stabilizer" evidence="1">
    <location>
        <position position="325"/>
    </location>
</feature>
<feature type="modified residue" description="N6,N6,N6-trimethyllysine" evidence="1">
    <location>
        <position position="5"/>
    </location>
</feature>
<feature type="modified residue" description="N6-carboxylysine" evidence="2">
    <location>
        <position position="192"/>
    </location>
</feature>
<feature type="non-terminal residue">
    <location>
        <position position="1"/>
    </location>
</feature>
<feature type="non-terminal residue">
    <location>
        <position position="394"/>
    </location>
</feature>